<feature type="chain" id="PRO_0000226557" description="Nucleoside diphosphate kinase">
    <location>
        <begin position="1"/>
        <end position="142"/>
    </location>
</feature>
<feature type="active site" description="Pros-phosphohistidine intermediate" evidence="1">
    <location>
        <position position="117"/>
    </location>
</feature>
<feature type="binding site" evidence="1">
    <location>
        <position position="11"/>
    </location>
    <ligand>
        <name>ATP</name>
        <dbReference type="ChEBI" id="CHEBI:30616"/>
    </ligand>
</feature>
<feature type="binding site" evidence="1">
    <location>
        <position position="59"/>
    </location>
    <ligand>
        <name>ATP</name>
        <dbReference type="ChEBI" id="CHEBI:30616"/>
    </ligand>
</feature>
<feature type="binding site" evidence="1">
    <location>
        <position position="87"/>
    </location>
    <ligand>
        <name>ATP</name>
        <dbReference type="ChEBI" id="CHEBI:30616"/>
    </ligand>
</feature>
<feature type="binding site" evidence="1">
    <location>
        <position position="93"/>
    </location>
    <ligand>
        <name>ATP</name>
        <dbReference type="ChEBI" id="CHEBI:30616"/>
    </ligand>
</feature>
<feature type="binding site" evidence="1">
    <location>
        <position position="104"/>
    </location>
    <ligand>
        <name>ATP</name>
        <dbReference type="ChEBI" id="CHEBI:30616"/>
    </ligand>
</feature>
<feature type="binding site" evidence="1">
    <location>
        <position position="114"/>
    </location>
    <ligand>
        <name>ATP</name>
        <dbReference type="ChEBI" id="CHEBI:30616"/>
    </ligand>
</feature>
<reference key="1">
    <citation type="journal article" date="2009" name="BMC Genomics">
        <title>Metabolic analysis of the soil microbe Dechloromonas aromatica str. RCB: indications of a surprisingly complex life-style and cryptic anaerobic pathways for aromatic degradation.</title>
        <authorList>
            <person name="Salinero K.K."/>
            <person name="Keller K."/>
            <person name="Feil W.S."/>
            <person name="Feil H."/>
            <person name="Trong S."/>
            <person name="Di Bartolo G."/>
            <person name="Lapidus A."/>
        </authorList>
    </citation>
    <scope>NUCLEOTIDE SEQUENCE [LARGE SCALE GENOMIC DNA]</scope>
    <source>
        <strain>RCB</strain>
    </source>
</reference>
<gene>
    <name evidence="1" type="primary">ndk</name>
    <name type="ordered locus">Daro_2989</name>
</gene>
<organism>
    <name type="scientific">Dechloromonas aromatica (strain RCB)</name>
    <dbReference type="NCBI Taxonomy" id="159087"/>
    <lineage>
        <taxon>Bacteria</taxon>
        <taxon>Pseudomonadati</taxon>
        <taxon>Pseudomonadota</taxon>
        <taxon>Betaproteobacteria</taxon>
        <taxon>Rhodocyclales</taxon>
        <taxon>Azonexaceae</taxon>
        <taxon>Dechloromonas</taxon>
    </lineage>
</organism>
<evidence type="ECO:0000255" key="1">
    <source>
        <dbReference type="HAMAP-Rule" id="MF_00451"/>
    </source>
</evidence>
<accession>Q47BR2</accession>
<protein>
    <recommendedName>
        <fullName evidence="1">Nucleoside diphosphate kinase</fullName>
        <shortName evidence="1">NDK</shortName>
        <shortName evidence="1">NDP kinase</shortName>
        <ecNumber evidence="1">2.7.4.6</ecNumber>
    </recommendedName>
    <alternativeName>
        <fullName evidence="1">Nucleoside-2-P kinase</fullName>
    </alternativeName>
</protein>
<sequence>MAIERTLSIIKPDAVAKNVIGKIYSRFESNGLKVIAARMTWLSEQEAGQFYSVHKERPFFKDLVSFMTSGPVMIQALEGENAIAKNRELMGATDPKKADAGTIRADFAESIDANAVHGSDAPETAAVEIAFFFPGMNTYAGR</sequence>
<proteinExistence type="inferred from homology"/>
<name>NDK_DECAR</name>
<dbReference type="EC" id="2.7.4.6" evidence="1"/>
<dbReference type="EMBL" id="CP000089">
    <property type="protein sequence ID" value="AAZ47719.1"/>
    <property type="molecule type" value="Genomic_DNA"/>
</dbReference>
<dbReference type="SMR" id="Q47BR2"/>
<dbReference type="STRING" id="159087.Daro_2989"/>
<dbReference type="KEGG" id="dar:Daro_2989"/>
<dbReference type="eggNOG" id="COG0105">
    <property type="taxonomic scope" value="Bacteria"/>
</dbReference>
<dbReference type="HOGENOM" id="CLU_060216_8_1_4"/>
<dbReference type="OrthoDB" id="9801161at2"/>
<dbReference type="GO" id="GO:0005737">
    <property type="term" value="C:cytoplasm"/>
    <property type="evidence" value="ECO:0007669"/>
    <property type="project" value="UniProtKB-SubCell"/>
</dbReference>
<dbReference type="GO" id="GO:0005524">
    <property type="term" value="F:ATP binding"/>
    <property type="evidence" value="ECO:0007669"/>
    <property type="project" value="UniProtKB-UniRule"/>
</dbReference>
<dbReference type="GO" id="GO:0046872">
    <property type="term" value="F:metal ion binding"/>
    <property type="evidence" value="ECO:0007669"/>
    <property type="project" value="UniProtKB-KW"/>
</dbReference>
<dbReference type="GO" id="GO:0004550">
    <property type="term" value="F:nucleoside diphosphate kinase activity"/>
    <property type="evidence" value="ECO:0007669"/>
    <property type="project" value="UniProtKB-UniRule"/>
</dbReference>
<dbReference type="GO" id="GO:0006241">
    <property type="term" value="P:CTP biosynthetic process"/>
    <property type="evidence" value="ECO:0007669"/>
    <property type="project" value="UniProtKB-UniRule"/>
</dbReference>
<dbReference type="GO" id="GO:0006183">
    <property type="term" value="P:GTP biosynthetic process"/>
    <property type="evidence" value="ECO:0007669"/>
    <property type="project" value="UniProtKB-UniRule"/>
</dbReference>
<dbReference type="GO" id="GO:0006228">
    <property type="term" value="P:UTP biosynthetic process"/>
    <property type="evidence" value="ECO:0007669"/>
    <property type="project" value="UniProtKB-UniRule"/>
</dbReference>
<dbReference type="CDD" id="cd04413">
    <property type="entry name" value="NDPk_I"/>
    <property type="match status" value="1"/>
</dbReference>
<dbReference type="FunFam" id="3.30.70.141:FF:000001">
    <property type="entry name" value="Nucleoside diphosphate kinase"/>
    <property type="match status" value="1"/>
</dbReference>
<dbReference type="Gene3D" id="3.30.70.141">
    <property type="entry name" value="Nucleoside diphosphate kinase-like domain"/>
    <property type="match status" value="1"/>
</dbReference>
<dbReference type="HAMAP" id="MF_00451">
    <property type="entry name" value="NDP_kinase"/>
    <property type="match status" value="1"/>
</dbReference>
<dbReference type="InterPro" id="IPR034907">
    <property type="entry name" value="NDK-like_dom"/>
</dbReference>
<dbReference type="InterPro" id="IPR036850">
    <property type="entry name" value="NDK-like_dom_sf"/>
</dbReference>
<dbReference type="InterPro" id="IPR001564">
    <property type="entry name" value="Nucleoside_diP_kinase"/>
</dbReference>
<dbReference type="InterPro" id="IPR023005">
    <property type="entry name" value="Nucleoside_diP_kinase_AS"/>
</dbReference>
<dbReference type="NCBIfam" id="NF001908">
    <property type="entry name" value="PRK00668.1"/>
    <property type="match status" value="1"/>
</dbReference>
<dbReference type="PANTHER" id="PTHR46161">
    <property type="entry name" value="NUCLEOSIDE DIPHOSPHATE KINASE"/>
    <property type="match status" value="1"/>
</dbReference>
<dbReference type="PANTHER" id="PTHR46161:SF3">
    <property type="entry name" value="NUCLEOSIDE DIPHOSPHATE KINASE DDB_G0292928-RELATED"/>
    <property type="match status" value="1"/>
</dbReference>
<dbReference type="Pfam" id="PF00334">
    <property type="entry name" value="NDK"/>
    <property type="match status" value="1"/>
</dbReference>
<dbReference type="PRINTS" id="PR01243">
    <property type="entry name" value="NUCDPKINASE"/>
</dbReference>
<dbReference type="SMART" id="SM00562">
    <property type="entry name" value="NDK"/>
    <property type="match status" value="1"/>
</dbReference>
<dbReference type="SUPFAM" id="SSF54919">
    <property type="entry name" value="Nucleoside diphosphate kinase, NDK"/>
    <property type="match status" value="1"/>
</dbReference>
<dbReference type="PROSITE" id="PS00469">
    <property type="entry name" value="NDPK"/>
    <property type="match status" value="1"/>
</dbReference>
<dbReference type="PROSITE" id="PS51374">
    <property type="entry name" value="NDPK_LIKE"/>
    <property type="match status" value="1"/>
</dbReference>
<comment type="function">
    <text evidence="1">Major role in the synthesis of nucleoside triphosphates other than ATP. The ATP gamma phosphate is transferred to the NDP beta phosphate via a ping-pong mechanism, using a phosphorylated active-site intermediate.</text>
</comment>
<comment type="catalytic activity">
    <reaction evidence="1">
        <text>a 2'-deoxyribonucleoside 5'-diphosphate + ATP = a 2'-deoxyribonucleoside 5'-triphosphate + ADP</text>
        <dbReference type="Rhea" id="RHEA:44640"/>
        <dbReference type="ChEBI" id="CHEBI:30616"/>
        <dbReference type="ChEBI" id="CHEBI:61560"/>
        <dbReference type="ChEBI" id="CHEBI:73316"/>
        <dbReference type="ChEBI" id="CHEBI:456216"/>
        <dbReference type="EC" id="2.7.4.6"/>
    </reaction>
</comment>
<comment type="catalytic activity">
    <reaction evidence="1">
        <text>a ribonucleoside 5'-diphosphate + ATP = a ribonucleoside 5'-triphosphate + ADP</text>
        <dbReference type="Rhea" id="RHEA:18113"/>
        <dbReference type="ChEBI" id="CHEBI:30616"/>
        <dbReference type="ChEBI" id="CHEBI:57930"/>
        <dbReference type="ChEBI" id="CHEBI:61557"/>
        <dbReference type="ChEBI" id="CHEBI:456216"/>
        <dbReference type="EC" id="2.7.4.6"/>
    </reaction>
</comment>
<comment type="cofactor">
    <cofactor evidence="1">
        <name>Mg(2+)</name>
        <dbReference type="ChEBI" id="CHEBI:18420"/>
    </cofactor>
</comment>
<comment type="subunit">
    <text evidence="1">Homotetramer.</text>
</comment>
<comment type="subcellular location">
    <subcellularLocation>
        <location evidence="1">Cytoplasm</location>
    </subcellularLocation>
</comment>
<comment type="similarity">
    <text evidence="1">Belongs to the NDK family.</text>
</comment>
<keyword id="KW-0067">ATP-binding</keyword>
<keyword id="KW-0963">Cytoplasm</keyword>
<keyword id="KW-0418">Kinase</keyword>
<keyword id="KW-0460">Magnesium</keyword>
<keyword id="KW-0479">Metal-binding</keyword>
<keyword id="KW-0546">Nucleotide metabolism</keyword>
<keyword id="KW-0547">Nucleotide-binding</keyword>
<keyword id="KW-0597">Phosphoprotein</keyword>
<keyword id="KW-0808">Transferase</keyword>